<name>ATPG_HAHCH</name>
<proteinExistence type="inferred from homology"/>
<evidence type="ECO:0000255" key="1">
    <source>
        <dbReference type="HAMAP-Rule" id="MF_00815"/>
    </source>
</evidence>
<gene>
    <name evidence="1" type="primary">atpG</name>
    <name type="ordered locus">HCH_07072</name>
</gene>
<keyword id="KW-0066">ATP synthesis</keyword>
<keyword id="KW-0997">Cell inner membrane</keyword>
<keyword id="KW-1003">Cell membrane</keyword>
<keyword id="KW-0139">CF(1)</keyword>
<keyword id="KW-0375">Hydrogen ion transport</keyword>
<keyword id="KW-0406">Ion transport</keyword>
<keyword id="KW-0472">Membrane</keyword>
<keyword id="KW-1185">Reference proteome</keyword>
<keyword id="KW-0813">Transport</keyword>
<sequence length="287" mass="31753">MAVGKEIKTQIASIKSTQKITSAMQLVAASKMRKAQQRMAAGRPYADRIRSVISHIATANPEYRHLYLQEREAKRVGYIVVSTDRGLCGGLNVNAFREMMRSMKEWRDKGAEVDLCAVGQKAISFFRNYGGNVVAALSHLGDDPSLTKIVGSVKVMLDAYAEGKIDRLYLVHNRFVNTMTQKPTVAQLLPLPPAEDDEMIRRHWDYIYEPDAKGLLDGLLTRFIESQVYQAVVENNACEQAARMIAMKSATDNAGGIINELELAYNKARQAAITQEISEIVSGAAAV</sequence>
<feature type="chain" id="PRO_1000053224" description="ATP synthase gamma chain">
    <location>
        <begin position="1"/>
        <end position="287"/>
    </location>
</feature>
<comment type="function">
    <text evidence="1">Produces ATP from ADP in the presence of a proton gradient across the membrane. The gamma chain is believed to be important in regulating ATPase activity and the flow of protons through the CF(0) complex.</text>
</comment>
<comment type="subunit">
    <text evidence="1">F-type ATPases have 2 components, CF(1) - the catalytic core - and CF(0) - the membrane proton channel. CF(1) has five subunits: alpha(3), beta(3), gamma(1), delta(1), epsilon(1). CF(0) has three main subunits: a, b and c.</text>
</comment>
<comment type="subcellular location">
    <subcellularLocation>
        <location evidence="1">Cell inner membrane</location>
        <topology evidence="1">Peripheral membrane protein</topology>
    </subcellularLocation>
</comment>
<comment type="similarity">
    <text evidence="1">Belongs to the ATPase gamma chain family.</text>
</comment>
<organism>
    <name type="scientific">Hahella chejuensis (strain KCTC 2396)</name>
    <dbReference type="NCBI Taxonomy" id="349521"/>
    <lineage>
        <taxon>Bacteria</taxon>
        <taxon>Pseudomonadati</taxon>
        <taxon>Pseudomonadota</taxon>
        <taxon>Gammaproteobacteria</taxon>
        <taxon>Oceanospirillales</taxon>
        <taxon>Hahellaceae</taxon>
        <taxon>Hahella</taxon>
    </lineage>
</organism>
<dbReference type="EMBL" id="CP000155">
    <property type="protein sequence ID" value="ABC33684.1"/>
    <property type="molecule type" value="Genomic_DNA"/>
</dbReference>
<dbReference type="RefSeq" id="WP_011400734.1">
    <property type="nucleotide sequence ID" value="NC_007645.1"/>
</dbReference>
<dbReference type="SMR" id="Q2S6P0"/>
<dbReference type="STRING" id="349521.HCH_07072"/>
<dbReference type="KEGG" id="hch:HCH_07072"/>
<dbReference type="eggNOG" id="COG0224">
    <property type="taxonomic scope" value="Bacteria"/>
</dbReference>
<dbReference type="HOGENOM" id="CLU_050669_0_1_6"/>
<dbReference type="OrthoDB" id="9812769at2"/>
<dbReference type="Proteomes" id="UP000000238">
    <property type="component" value="Chromosome"/>
</dbReference>
<dbReference type="GO" id="GO:0005886">
    <property type="term" value="C:plasma membrane"/>
    <property type="evidence" value="ECO:0007669"/>
    <property type="project" value="UniProtKB-SubCell"/>
</dbReference>
<dbReference type="GO" id="GO:0045259">
    <property type="term" value="C:proton-transporting ATP synthase complex"/>
    <property type="evidence" value="ECO:0007669"/>
    <property type="project" value="UniProtKB-KW"/>
</dbReference>
<dbReference type="GO" id="GO:0005524">
    <property type="term" value="F:ATP binding"/>
    <property type="evidence" value="ECO:0007669"/>
    <property type="project" value="UniProtKB-UniRule"/>
</dbReference>
<dbReference type="GO" id="GO:0046933">
    <property type="term" value="F:proton-transporting ATP synthase activity, rotational mechanism"/>
    <property type="evidence" value="ECO:0007669"/>
    <property type="project" value="UniProtKB-UniRule"/>
</dbReference>
<dbReference type="GO" id="GO:0042777">
    <property type="term" value="P:proton motive force-driven plasma membrane ATP synthesis"/>
    <property type="evidence" value="ECO:0007669"/>
    <property type="project" value="UniProtKB-UniRule"/>
</dbReference>
<dbReference type="CDD" id="cd12151">
    <property type="entry name" value="F1-ATPase_gamma"/>
    <property type="match status" value="1"/>
</dbReference>
<dbReference type="FunFam" id="1.10.287.80:FF:000005">
    <property type="entry name" value="ATP synthase gamma chain"/>
    <property type="match status" value="1"/>
</dbReference>
<dbReference type="FunFam" id="3.40.1380.10:FF:000001">
    <property type="entry name" value="ATP synthase gamma chain"/>
    <property type="match status" value="1"/>
</dbReference>
<dbReference type="Gene3D" id="3.40.1380.10">
    <property type="match status" value="1"/>
</dbReference>
<dbReference type="Gene3D" id="1.10.287.80">
    <property type="entry name" value="ATP synthase, gamma subunit, helix hairpin domain"/>
    <property type="match status" value="2"/>
</dbReference>
<dbReference type="HAMAP" id="MF_00815">
    <property type="entry name" value="ATP_synth_gamma_bact"/>
    <property type="match status" value="1"/>
</dbReference>
<dbReference type="InterPro" id="IPR035968">
    <property type="entry name" value="ATP_synth_F1_ATPase_gsu"/>
</dbReference>
<dbReference type="InterPro" id="IPR000131">
    <property type="entry name" value="ATP_synth_F1_gsu"/>
</dbReference>
<dbReference type="InterPro" id="IPR023632">
    <property type="entry name" value="ATP_synth_F1_gsu_CS"/>
</dbReference>
<dbReference type="NCBIfam" id="TIGR01146">
    <property type="entry name" value="ATPsyn_F1gamma"/>
    <property type="match status" value="1"/>
</dbReference>
<dbReference type="NCBIfam" id="NF004144">
    <property type="entry name" value="PRK05621.1-1"/>
    <property type="match status" value="1"/>
</dbReference>
<dbReference type="PANTHER" id="PTHR11693">
    <property type="entry name" value="ATP SYNTHASE GAMMA CHAIN"/>
    <property type="match status" value="1"/>
</dbReference>
<dbReference type="PANTHER" id="PTHR11693:SF22">
    <property type="entry name" value="ATP SYNTHASE SUBUNIT GAMMA, MITOCHONDRIAL"/>
    <property type="match status" value="1"/>
</dbReference>
<dbReference type="Pfam" id="PF00231">
    <property type="entry name" value="ATP-synt"/>
    <property type="match status" value="1"/>
</dbReference>
<dbReference type="PRINTS" id="PR00126">
    <property type="entry name" value="ATPASEGAMMA"/>
</dbReference>
<dbReference type="SUPFAM" id="SSF52943">
    <property type="entry name" value="ATP synthase (F1-ATPase), gamma subunit"/>
    <property type="match status" value="1"/>
</dbReference>
<dbReference type="PROSITE" id="PS00153">
    <property type="entry name" value="ATPASE_GAMMA"/>
    <property type="match status" value="1"/>
</dbReference>
<accession>Q2S6P0</accession>
<reference key="1">
    <citation type="journal article" date="2005" name="Nucleic Acids Res.">
        <title>Genomic blueprint of Hahella chejuensis, a marine microbe producing an algicidal agent.</title>
        <authorList>
            <person name="Jeong H."/>
            <person name="Yim J.H."/>
            <person name="Lee C."/>
            <person name="Choi S.-H."/>
            <person name="Park Y.K."/>
            <person name="Yoon S.H."/>
            <person name="Hur C.-G."/>
            <person name="Kang H.-Y."/>
            <person name="Kim D."/>
            <person name="Lee H.H."/>
            <person name="Park K.H."/>
            <person name="Park S.-H."/>
            <person name="Park H.-S."/>
            <person name="Lee H.K."/>
            <person name="Oh T.K."/>
            <person name="Kim J.F."/>
        </authorList>
    </citation>
    <scope>NUCLEOTIDE SEQUENCE [LARGE SCALE GENOMIC DNA]</scope>
    <source>
        <strain>KCTC 2396</strain>
    </source>
</reference>
<protein>
    <recommendedName>
        <fullName evidence="1">ATP synthase gamma chain</fullName>
    </recommendedName>
    <alternativeName>
        <fullName evidence="1">ATP synthase F1 sector gamma subunit</fullName>
    </alternativeName>
    <alternativeName>
        <fullName evidence="1">F-ATPase gamma subunit</fullName>
    </alternativeName>
</protein>